<evidence type="ECO:0000255" key="1">
    <source>
        <dbReference type="HAMAP-Rule" id="MF_01522"/>
    </source>
</evidence>
<organism>
    <name type="scientific">Escherichia coli O17:K52:H18 (strain UMN026 / ExPEC)</name>
    <dbReference type="NCBI Taxonomy" id="585056"/>
    <lineage>
        <taxon>Bacteria</taxon>
        <taxon>Pseudomonadati</taxon>
        <taxon>Pseudomonadota</taxon>
        <taxon>Gammaproteobacteria</taxon>
        <taxon>Enterobacterales</taxon>
        <taxon>Enterobacteriaceae</taxon>
        <taxon>Escherichia</taxon>
    </lineage>
</organism>
<accession>B7NF63</accession>
<keyword id="KW-0997">Cell inner membrane</keyword>
<keyword id="KW-1003">Cell membrane</keyword>
<keyword id="KW-0406">Ion transport</keyword>
<keyword id="KW-0472">Membrane</keyword>
<keyword id="KW-0630">Potassium</keyword>
<keyword id="KW-0633">Potassium transport</keyword>
<keyword id="KW-0769">Symport</keyword>
<keyword id="KW-0812">Transmembrane</keyword>
<keyword id="KW-1133">Transmembrane helix</keyword>
<keyword id="KW-0813">Transport</keyword>
<sequence length="622" mass="69294">MSTDNKQSLPAITLAAIGVVYGDIGTSPLYTLRECLSGQFGFGVERDAVFGFLSLIFWLLIFVVSIKYLTFVMRADNAGEGGILTLMSLAGRNTSARTTSMLVIMGLIGGSFFYGEVVITPAISVMSAIEGLEIVAPQLDTWIVPLSIIVLTLLFMIQKHGTAMVGKLFAPIMLTWFLILAGLGLRSIIANPEVLHALNPMWAVHFFLEYKTVSFIALGAVVLSITGVEALYADMGHFGKFPIRLAWFTVVLPSLTLNYFGQGALLLKNPEAIKNPFFLLAPDWALIPLLIIAALATVIASQAVISGVFSLTRQAVRLGYLSPMRIIHTSEMESGQIYIPFVNWMLYVAVVIVIVSFEHSSNLAAAYGIAVTGTMVLTSILSTTVARQNWHWNKYFVALILIAFLCVDIPLFTANLDKLLSGGWLPLSLGTVMFIVMTTWKSERFRLLRRMHEHGNSLEAMIASLEKSPPVRVPGTAVYMSRAINVIPFALMHNLKHNKVLHERVILLTLRTEDAPYVHNVRRVQIEQLSPTFWRVVASYGWRETPNVEEVFHRCGLEGLSCRMMETSFFMSHESLILGKRPWYLRLRGKLYLLLQRNALRAPDQFEIPPNRVIELGTQVEI</sequence>
<feature type="chain" id="PRO_1000190266" description="Low affinity potassium transport system protein Kup">
    <location>
        <begin position="1"/>
        <end position="622"/>
    </location>
</feature>
<feature type="transmembrane region" description="Helical" evidence="1">
    <location>
        <begin position="9"/>
        <end position="29"/>
    </location>
</feature>
<feature type="transmembrane region" description="Helical" evidence="1">
    <location>
        <begin position="49"/>
        <end position="69"/>
    </location>
</feature>
<feature type="transmembrane region" description="Helical" evidence="1">
    <location>
        <begin position="103"/>
        <end position="123"/>
    </location>
</feature>
<feature type="transmembrane region" description="Helical" evidence="1">
    <location>
        <begin position="137"/>
        <end position="157"/>
    </location>
</feature>
<feature type="transmembrane region" description="Helical" evidence="1">
    <location>
        <begin position="165"/>
        <end position="185"/>
    </location>
</feature>
<feature type="transmembrane region" description="Helical" evidence="1">
    <location>
        <begin position="213"/>
        <end position="233"/>
    </location>
</feature>
<feature type="transmembrane region" description="Helical" evidence="1">
    <location>
        <begin position="247"/>
        <end position="267"/>
    </location>
</feature>
<feature type="transmembrane region" description="Helical" evidence="1">
    <location>
        <begin position="276"/>
        <end position="296"/>
    </location>
</feature>
<feature type="transmembrane region" description="Helical" evidence="1">
    <location>
        <begin position="337"/>
        <end position="357"/>
    </location>
</feature>
<feature type="transmembrane region" description="Helical" evidence="1">
    <location>
        <begin position="363"/>
        <end position="383"/>
    </location>
</feature>
<feature type="transmembrane region" description="Helical" evidence="1">
    <location>
        <begin position="396"/>
        <end position="416"/>
    </location>
</feature>
<feature type="transmembrane region" description="Helical" evidence="1">
    <location>
        <begin position="419"/>
        <end position="439"/>
    </location>
</feature>
<name>KUP_ECOLU</name>
<proteinExistence type="inferred from homology"/>
<comment type="function">
    <text evidence="1">Responsible for the low-affinity transport of potassium into the cell. Likely operates as a K(+):H(+) symporter.</text>
</comment>
<comment type="catalytic activity">
    <reaction evidence="1">
        <text>K(+)(in) + H(+)(in) = K(+)(out) + H(+)(out)</text>
        <dbReference type="Rhea" id="RHEA:28490"/>
        <dbReference type="ChEBI" id="CHEBI:15378"/>
        <dbReference type="ChEBI" id="CHEBI:29103"/>
    </reaction>
    <physiologicalReaction direction="right-to-left" evidence="1">
        <dbReference type="Rhea" id="RHEA:28492"/>
    </physiologicalReaction>
</comment>
<comment type="subcellular location">
    <subcellularLocation>
        <location evidence="1">Cell inner membrane</location>
        <topology evidence="1">Multi-pass membrane protein</topology>
    </subcellularLocation>
</comment>
<comment type="similarity">
    <text evidence="1">Belongs to the HAK/KUP transporter (TC 2.A.72) family.</text>
</comment>
<reference key="1">
    <citation type="journal article" date="2009" name="PLoS Genet.">
        <title>Organised genome dynamics in the Escherichia coli species results in highly diverse adaptive paths.</title>
        <authorList>
            <person name="Touchon M."/>
            <person name="Hoede C."/>
            <person name="Tenaillon O."/>
            <person name="Barbe V."/>
            <person name="Baeriswyl S."/>
            <person name="Bidet P."/>
            <person name="Bingen E."/>
            <person name="Bonacorsi S."/>
            <person name="Bouchier C."/>
            <person name="Bouvet O."/>
            <person name="Calteau A."/>
            <person name="Chiapello H."/>
            <person name="Clermont O."/>
            <person name="Cruveiller S."/>
            <person name="Danchin A."/>
            <person name="Diard M."/>
            <person name="Dossat C."/>
            <person name="Karoui M.E."/>
            <person name="Frapy E."/>
            <person name="Garry L."/>
            <person name="Ghigo J.M."/>
            <person name="Gilles A.M."/>
            <person name="Johnson J."/>
            <person name="Le Bouguenec C."/>
            <person name="Lescat M."/>
            <person name="Mangenot S."/>
            <person name="Martinez-Jehanne V."/>
            <person name="Matic I."/>
            <person name="Nassif X."/>
            <person name="Oztas S."/>
            <person name="Petit M.A."/>
            <person name="Pichon C."/>
            <person name="Rouy Z."/>
            <person name="Ruf C.S."/>
            <person name="Schneider D."/>
            <person name="Tourret J."/>
            <person name="Vacherie B."/>
            <person name="Vallenet D."/>
            <person name="Medigue C."/>
            <person name="Rocha E.P.C."/>
            <person name="Denamur E."/>
        </authorList>
    </citation>
    <scope>NUCLEOTIDE SEQUENCE [LARGE SCALE GENOMIC DNA]</scope>
    <source>
        <strain>UMN026 / ExPEC</strain>
    </source>
</reference>
<dbReference type="EMBL" id="CU928163">
    <property type="protein sequence ID" value="CAR15417.1"/>
    <property type="molecule type" value="Genomic_DNA"/>
</dbReference>
<dbReference type="RefSeq" id="WP_000102319.1">
    <property type="nucleotide sequence ID" value="NC_011751.1"/>
</dbReference>
<dbReference type="RefSeq" id="YP_002414912.1">
    <property type="nucleotide sequence ID" value="NC_011751.1"/>
</dbReference>
<dbReference type="STRING" id="585056.ECUMN_4277"/>
<dbReference type="GeneID" id="75205465"/>
<dbReference type="KEGG" id="eum:ECUMN_4277"/>
<dbReference type="PATRIC" id="fig|585056.7.peg.4449"/>
<dbReference type="HOGENOM" id="CLU_008142_4_2_6"/>
<dbReference type="Proteomes" id="UP000007097">
    <property type="component" value="Chromosome"/>
</dbReference>
<dbReference type="GO" id="GO:0005886">
    <property type="term" value="C:plasma membrane"/>
    <property type="evidence" value="ECO:0007669"/>
    <property type="project" value="UniProtKB-SubCell"/>
</dbReference>
<dbReference type="GO" id="GO:0015079">
    <property type="term" value="F:potassium ion transmembrane transporter activity"/>
    <property type="evidence" value="ECO:0007669"/>
    <property type="project" value="UniProtKB-UniRule"/>
</dbReference>
<dbReference type="GO" id="GO:0015293">
    <property type="term" value="F:symporter activity"/>
    <property type="evidence" value="ECO:0007669"/>
    <property type="project" value="UniProtKB-UniRule"/>
</dbReference>
<dbReference type="HAMAP" id="MF_01522">
    <property type="entry name" value="Kup"/>
    <property type="match status" value="1"/>
</dbReference>
<dbReference type="InterPro" id="IPR003855">
    <property type="entry name" value="K+_transporter"/>
</dbReference>
<dbReference type="InterPro" id="IPR053952">
    <property type="entry name" value="K_trans_C"/>
</dbReference>
<dbReference type="InterPro" id="IPR053951">
    <property type="entry name" value="K_trans_N"/>
</dbReference>
<dbReference type="InterPro" id="IPR023051">
    <property type="entry name" value="Kup"/>
</dbReference>
<dbReference type="NCBIfam" id="TIGR00794">
    <property type="entry name" value="kup"/>
    <property type="match status" value="1"/>
</dbReference>
<dbReference type="NCBIfam" id="NF008015">
    <property type="entry name" value="PRK10745.1"/>
    <property type="match status" value="1"/>
</dbReference>
<dbReference type="PANTHER" id="PTHR30540:SF79">
    <property type="entry name" value="LOW AFFINITY POTASSIUM TRANSPORT SYSTEM PROTEIN KUP"/>
    <property type="match status" value="1"/>
</dbReference>
<dbReference type="PANTHER" id="PTHR30540">
    <property type="entry name" value="OSMOTIC STRESS POTASSIUM TRANSPORTER"/>
    <property type="match status" value="1"/>
</dbReference>
<dbReference type="Pfam" id="PF02705">
    <property type="entry name" value="K_trans"/>
    <property type="match status" value="1"/>
</dbReference>
<dbReference type="Pfam" id="PF22776">
    <property type="entry name" value="K_trans_C"/>
    <property type="match status" value="1"/>
</dbReference>
<gene>
    <name evidence="1" type="primary">kup</name>
    <name type="ordered locus">ECUMN_4277</name>
</gene>
<protein>
    <recommendedName>
        <fullName evidence="1">Low affinity potassium transport system protein Kup</fullName>
    </recommendedName>
    <alternativeName>
        <fullName evidence="1">Kup system potassium uptake protein</fullName>
    </alternativeName>
</protein>